<geneLocation type="chloroplast"/>
<comment type="function">
    <text evidence="1">Produces ATP from ADP in the presence of a proton gradient across the membrane.</text>
</comment>
<comment type="subunit">
    <text evidence="1">F-type ATPases have 2 components, CF(1) - the catalytic core - and CF(0) - the membrane proton channel. CF(1) has five subunits: alpha(3), beta(3), gamma(1), delta(1), epsilon(1). CF(0) has three main subunits: a, b and c.</text>
</comment>
<comment type="subcellular location">
    <subcellularLocation>
        <location evidence="1">Plastid</location>
        <location evidence="1">Chloroplast thylakoid membrane</location>
        <topology evidence="1">Peripheral membrane protein</topology>
    </subcellularLocation>
</comment>
<comment type="similarity">
    <text evidence="1">Belongs to the ATPase epsilon chain family.</text>
</comment>
<name>ATPE_SACOF</name>
<dbReference type="EMBL" id="AP006714">
    <property type="protein sequence ID" value="BAD27299.1"/>
    <property type="molecule type" value="Genomic_DNA"/>
</dbReference>
<dbReference type="RefSeq" id="YP_009389577.1">
    <property type="nucleotide sequence ID" value="NC_035224.1"/>
</dbReference>
<dbReference type="SMR" id="Q6ENV7"/>
<dbReference type="GeneID" id="33347885"/>
<dbReference type="GO" id="GO:0009535">
    <property type="term" value="C:chloroplast thylakoid membrane"/>
    <property type="evidence" value="ECO:0007669"/>
    <property type="project" value="UniProtKB-SubCell"/>
</dbReference>
<dbReference type="GO" id="GO:0045259">
    <property type="term" value="C:proton-transporting ATP synthase complex"/>
    <property type="evidence" value="ECO:0007669"/>
    <property type="project" value="UniProtKB-KW"/>
</dbReference>
<dbReference type="GO" id="GO:0005524">
    <property type="term" value="F:ATP binding"/>
    <property type="evidence" value="ECO:0007669"/>
    <property type="project" value="UniProtKB-UniRule"/>
</dbReference>
<dbReference type="GO" id="GO:0046933">
    <property type="term" value="F:proton-transporting ATP synthase activity, rotational mechanism"/>
    <property type="evidence" value="ECO:0007669"/>
    <property type="project" value="UniProtKB-UniRule"/>
</dbReference>
<dbReference type="CDD" id="cd12152">
    <property type="entry name" value="F1-ATPase_delta"/>
    <property type="match status" value="1"/>
</dbReference>
<dbReference type="FunFam" id="2.60.15.10:FF:000002">
    <property type="entry name" value="ATP synthase epsilon chain, chloroplastic"/>
    <property type="match status" value="1"/>
</dbReference>
<dbReference type="Gene3D" id="6.10.140.480">
    <property type="match status" value="1"/>
</dbReference>
<dbReference type="Gene3D" id="2.60.15.10">
    <property type="entry name" value="F0F1 ATP synthase delta/epsilon subunit, N-terminal"/>
    <property type="match status" value="1"/>
</dbReference>
<dbReference type="HAMAP" id="MF_00530">
    <property type="entry name" value="ATP_synth_epsil_bac"/>
    <property type="match status" value="1"/>
</dbReference>
<dbReference type="InterPro" id="IPR001469">
    <property type="entry name" value="ATP_synth_F1_dsu/esu"/>
</dbReference>
<dbReference type="InterPro" id="IPR020546">
    <property type="entry name" value="ATP_synth_F1_dsu/esu_N"/>
</dbReference>
<dbReference type="InterPro" id="IPR020547">
    <property type="entry name" value="ATP_synth_F1_esu_C"/>
</dbReference>
<dbReference type="InterPro" id="IPR036771">
    <property type="entry name" value="ATPsynth_dsu/esu_N"/>
</dbReference>
<dbReference type="NCBIfam" id="TIGR01216">
    <property type="entry name" value="ATP_synt_epsi"/>
    <property type="match status" value="1"/>
</dbReference>
<dbReference type="PANTHER" id="PTHR13822">
    <property type="entry name" value="ATP SYNTHASE DELTA/EPSILON CHAIN"/>
    <property type="match status" value="1"/>
</dbReference>
<dbReference type="PANTHER" id="PTHR13822:SF10">
    <property type="entry name" value="ATP SYNTHASE EPSILON CHAIN, CHLOROPLASTIC"/>
    <property type="match status" value="1"/>
</dbReference>
<dbReference type="Pfam" id="PF00401">
    <property type="entry name" value="ATP-synt_DE"/>
    <property type="match status" value="1"/>
</dbReference>
<dbReference type="Pfam" id="PF02823">
    <property type="entry name" value="ATP-synt_DE_N"/>
    <property type="match status" value="1"/>
</dbReference>
<dbReference type="SUPFAM" id="SSF51344">
    <property type="entry name" value="Epsilon subunit of F1F0-ATP synthase N-terminal domain"/>
    <property type="match status" value="1"/>
</dbReference>
<feature type="chain" id="PRO_0000188293" description="ATP synthase epsilon chain, chloroplastic">
    <location>
        <begin position="1"/>
        <end position="137"/>
    </location>
</feature>
<keyword id="KW-0066">ATP synthesis</keyword>
<keyword id="KW-0139">CF(1)</keyword>
<keyword id="KW-0150">Chloroplast</keyword>
<keyword id="KW-0375">Hydrogen ion transport</keyword>
<keyword id="KW-0406">Ion transport</keyword>
<keyword id="KW-0472">Membrane</keyword>
<keyword id="KW-0934">Plastid</keyword>
<keyword id="KW-0793">Thylakoid</keyword>
<keyword id="KW-0813">Transport</keyword>
<organism>
    <name type="scientific">Saccharum officinarum</name>
    <name type="common">Sugarcane</name>
    <dbReference type="NCBI Taxonomy" id="4547"/>
    <lineage>
        <taxon>Eukaryota</taxon>
        <taxon>Viridiplantae</taxon>
        <taxon>Streptophyta</taxon>
        <taxon>Embryophyta</taxon>
        <taxon>Tracheophyta</taxon>
        <taxon>Spermatophyta</taxon>
        <taxon>Magnoliopsida</taxon>
        <taxon>Liliopsida</taxon>
        <taxon>Poales</taxon>
        <taxon>Poaceae</taxon>
        <taxon>PACMAD clade</taxon>
        <taxon>Panicoideae</taxon>
        <taxon>Andropogonodae</taxon>
        <taxon>Andropogoneae</taxon>
        <taxon>Saccharinae</taxon>
        <taxon>Saccharum</taxon>
        <taxon>Saccharum officinarum species complex</taxon>
    </lineage>
</organism>
<reference key="1">
    <citation type="journal article" date="2004" name="DNA Res.">
        <title>Complete nucleotide sequence of the sugarcane (Saccharum officinarum) chloroplast genome: a comparative analysis of four monocot chloroplast genomes.</title>
        <authorList>
            <person name="Asano T."/>
            <person name="Tsudzuki T."/>
            <person name="Takahashi S."/>
            <person name="Shimada H."/>
            <person name="Kadowaki K."/>
        </authorList>
    </citation>
    <scope>NUCLEOTIDE SEQUENCE [LARGE SCALE GENOMIC DNA]</scope>
</reference>
<gene>
    <name evidence="1" type="primary">atpE</name>
</gene>
<evidence type="ECO:0000255" key="1">
    <source>
        <dbReference type="HAMAP-Rule" id="MF_00530"/>
    </source>
</evidence>
<accession>Q6ENV7</accession>
<proteinExistence type="inferred from homology"/>
<protein>
    <recommendedName>
        <fullName evidence="1">ATP synthase epsilon chain, chloroplastic</fullName>
    </recommendedName>
    <alternativeName>
        <fullName evidence="1">ATP synthase F1 sector epsilon subunit</fullName>
    </alternativeName>
    <alternativeName>
        <fullName evidence="1">F-ATPase epsilon subunit</fullName>
    </alternativeName>
</protein>
<sequence>MKLNLYVLTPKRIIWDCEVKEIILSTNSGQIGVLPNHAPINTAVDMGPLRIRLLNDQWLTAVLWSGFARIVNNEIIILGNDAELGSDIDPEEAQQALEIAEANLSKAEGTKELVEAKLALRRARIRVEAVNWIPPSN</sequence>